<protein>
    <recommendedName>
        <fullName evidence="1">NAD(P)H dehydrogenase (quinone)</fullName>
        <ecNumber evidence="1">1.6.5.2</ecNumber>
    </recommendedName>
    <alternativeName>
        <fullName>Flavoprotein WrbA</fullName>
    </alternativeName>
    <alternativeName>
        <fullName evidence="1">NAD(P)H:quinone oxidoreductase</fullName>
        <shortName evidence="1">NQO</shortName>
    </alternativeName>
</protein>
<feature type="chain" id="PRO_1000213243" description="NAD(P)H dehydrogenase (quinone)">
    <location>
        <begin position="1"/>
        <end position="198"/>
    </location>
</feature>
<feature type="domain" description="Flavodoxin-like" evidence="1">
    <location>
        <begin position="4"/>
        <end position="190"/>
    </location>
</feature>
<feature type="binding site" evidence="1">
    <location>
        <begin position="10"/>
        <end position="15"/>
    </location>
    <ligand>
        <name>FMN</name>
        <dbReference type="ChEBI" id="CHEBI:58210"/>
    </ligand>
</feature>
<feature type="binding site" evidence="1">
    <location>
        <position position="12"/>
    </location>
    <ligand>
        <name>NAD(+)</name>
        <dbReference type="ChEBI" id="CHEBI:57540"/>
    </ligand>
</feature>
<feature type="binding site" evidence="1">
    <location>
        <begin position="79"/>
        <end position="81"/>
    </location>
    <ligand>
        <name>FMN</name>
        <dbReference type="ChEBI" id="CHEBI:58210"/>
    </ligand>
</feature>
<feature type="binding site" evidence="1">
    <location>
        <position position="99"/>
    </location>
    <ligand>
        <name>substrate</name>
    </ligand>
</feature>
<feature type="binding site" evidence="1">
    <location>
        <begin position="114"/>
        <end position="119"/>
    </location>
    <ligand>
        <name>FMN</name>
        <dbReference type="ChEBI" id="CHEBI:58210"/>
    </ligand>
</feature>
<feature type="binding site" evidence="1">
    <location>
        <position position="134"/>
    </location>
    <ligand>
        <name>FMN</name>
        <dbReference type="ChEBI" id="CHEBI:58210"/>
    </ligand>
</feature>
<evidence type="ECO:0000255" key="1">
    <source>
        <dbReference type="HAMAP-Rule" id="MF_01017"/>
    </source>
</evidence>
<sequence>MKKILVLYYSMYGHIERMAEAVAEGARSVPGVEVTLKRVPETMPEEVARKAGAKLDQAAPPAEPKELADYDAILFGTPTRFGNMAGQMRNFLDQTGGLWVSGALVGKFASVFTSTGTGGGSETTITSFWHTLAHHGMVIVGLPYVLPELSDVSEPRGGSPYGAATIAGADGSRRPSEKELILASFQGAHVARLVVRMQ</sequence>
<proteinExistence type="inferred from homology"/>
<accession>C1DFX8</accession>
<comment type="catalytic activity">
    <reaction evidence="1">
        <text>a quinone + NADH + H(+) = a quinol + NAD(+)</text>
        <dbReference type="Rhea" id="RHEA:46160"/>
        <dbReference type="ChEBI" id="CHEBI:15378"/>
        <dbReference type="ChEBI" id="CHEBI:24646"/>
        <dbReference type="ChEBI" id="CHEBI:57540"/>
        <dbReference type="ChEBI" id="CHEBI:57945"/>
        <dbReference type="ChEBI" id="CHEBI:132124"/>
        <dbReference type="EC" id="1.6.5.2"/>
    </reaction>
</comment>
<comment type="catalytic activity">
    <reaction evidence="1">
        <text>a quinone + NADPH + H(+) = a quinol + NADP(+)</text>
        <dbReference type="Rhea" id="RHEA:46164"/>
        <dbReference type="ChEBI" id="CHEBI:15378"/>
        <dbReference type="ChEBI" id="CHEBI:24646"/>
        <dbReference type="ChEBI" id="CHEBI:57783"/>
        <dbReference type="ChEBI" id="CHEBI:58349"/>
        <dbReference type="ChEBI" id="CHEBI:132124"/>
        <dbReference type="EC" id="1.6.5.2"/>
    </reaction>
</comment>
<comment type="cofactor">
    <cofactor evidence="1">
        <name>FMN</name>
        <dbReference type="ChEBI" id="CHEBI:58210"/>
    </cofactor>
    <text evidence="1">Binds 1 FMN per monomer.</text>
</comment>
<comment type="similarity">
    <text evidence="1">Belongs to the WrbA family.</text>
</comment>
<organism>
    <name type="scientific">Azotobacter vinelandii (strain DJ / ATCC BAA-1303)</name>
    <dbReference type="NCBI Taxonomy" id="322710"/>
    <lineage>
        <taxon>Bacteria</taxon>
        <taxon>Pseudomonadati</taxon>
        <taxon>Pseudomonadota</taxon>
        <taxon>Gammaproteobacteria</taxon>
        <taxon>Pseudomonadales</taxon>
        <taxon>Pseudomonadaceae</taxon>
        <taxon>Azotobacter</taxon>
    </lineage>
</organism>
<dbReference type="EC" id="1.6.5.2" evidence="1"/>
<dbReference type="EMBL" id="CP001157">
    <property type="protein sequence ID" value="ACO76305.1"/>
    <property type="molecule type" value="Genomic_DNA"/>
</dbReference>
<dbReference type="RefSeq" id="WP_012698733.1">
    <property type="nucleotide sequence ID" value="NC_012560.1"/>
</dbReference>
<dbReference type="SMR" id="C1DFX8"/>
<dbReference type="STRING" id="322710.Avin_00380"/>
<dbReference type="EnsemblBacteria" id="ACO76305">
    <property type="protein sequence ID" value="ACO76305"/>
    <property type="gene ID" value="Avin_00380"/>
</dbReference>
<dbReference type="GeneID" id="88183515"/>
<dbReference type="KEGG" id="avn:Avin_00380"/>
<dbReference type="eggNOG" id="COG0655">
    <property type="taxonomic scope" value="Bacteria"/>
</dbReference>
<dbReference type="HOGENOM" id="CLU_051402_0_2_6"/>
<dbReference type="OrthoDB" id="9801479at2"/>
<dbReference type="Proteomes" id="UP000002424">
    <property type="component" value="Chromosome"/>
</dbReference>
<dbReference type="GO" id="GO:0016020">
    <property type="term" value="C:membrane"/>
    <property type="evidence" value="ECO:0007669"/>
    <property type="project" value="TreeGrafter"/>
</dbReference>
<dbReference type="GO" id="GO:0050660">
    <property type="term" value="F:flavin adenine dinucleotide binding"/>
    <property type="evidence" value="ECO:0007669"/>
    <property type="project" value="UniProtKB-UniRule"/>
</dbReference>
<dbReference type="GO" id="GO:0010181">
    <property type="term" value="F:FMN binding"/>
    <property type="evidence" value="ECO:0007669"/>
    <property type="project" value="InterPro"/>
</dbReference>
<dbReference type="GO" id="GO:0051287">
    <property type="term" value="F:NAD binding"/>
    <property type="evidence" value="ECO:0007669"/>
    <property type="project" value="UniProtKB-UniRule"/>
</dbReference>
<dbReference type="GO" id="GO:0050136">
    <property type="term" value="F:NADH:ubiquinone reductase (non-electrogenic) activity"/>
    <property type="evidence" value="ECO:0007669"/>
    <property type="project" value="RHEA"/>
</dbReference>
<dbReference type="GO" id="GO:0050661">
    <property type="term" value="F:NADP binding"/>
    <property type="evidence" value="ECO:0007669"/>
    <property type="project" value="UniProtKB-UniRule"/>
</dbReference>
<dbReference type="GO" id="GO:0008753">
    <property type="term" value="F:NADPH dehydrogenase (quinone) activity"/>
    <property type="evidence" value="ECO:0007669"/>
    <property type="project" value="RHEA"/>
</dbReference>
<dbReference type="FunFam" id="3.40.50.360:FF:000001">
    <property type="entry name" value="NAD(P)H dehydrogenase (Quinone) FQR1-like"/>
    <property type="match status" value="1"/>
</dbReference>
<dbReference type="Gene3D" id="3.40.50.360">
    <property type="match status" value="1"/>
</dbReference>
<dbReference type="HAMAP" id="MF_01017">
    <property type="entry name" value="NQOR"/>
    <property type="match status" value="1"/>
</dbReference>
<dbReference type="InterPro" id="IPR008254">
    <property type="entry name" value="Flavodoxin/NO_synth"/>
</dbReference>
<dbReference type="InterPro" id="IPR029039">
    <property type="entry name" value="Flavoprotein-like_sf"/>
</dbReference>
<dbReference type="InterPro" id="IPR010089">
    <property type="entry name" value="Flavoprotein_WrbA-like"/>
</dbReference>
<dbReference type="InterPro" id="IPR005025">
    <property type="entry name" value="FMN_Rdtase-like_dom"/>
</dbReference>
<dbReference type="InterPro" id="IPR037513">
    <property type="entry name" value="NQO"/>
</dbReference>
<dbReference type="NCBIfam" id="TIGR01755">
    <property type="entry name" value="flav_wrbA"/>
    <property type="match status" value="1"/>
</dbReference>
<dbReference type="NCBIfam" id="NF002999">
    <property type="entry name" value="PRK03767.1"/>
    <property type="match status" value="1"/>
</dbReference>
<dbReference type="PANTHER" id="PTHR30546">
    <property type="entry name" value="FLAVODOXIN-RELATED PROTEIN WRBA-RELATED"/>
    <property type="match status" value="1"/>
</dbReference>
<dbReference type="PANTHER" id="PTHR30546:SF23">
    <property type="entry name" value="FLAVOPROTEIN-LIKE PROTEIN YCP4-RELATED"/>
    <property type="match status" value="1"/>
</dbReference>
<dbReference type="Pfam" id="PF03358">
    <property type="entry name" value="FMN_red"/>
    <property type="match status" value="1"/>
</dbReference>
<dbReference type="SUPFAM" id="SSF52218">
    <property type="entry name" value="Flavoproteins"/>
    <property type="match status" value="1"/>
</dbReference>
<dbReference type="PROSITE" id="PS50902">
    <property type="entry name" value="FLAVODOXIN_LIKE"/>
    <property type="match status" value="1"/>
</dbReference>
<gene>
    <name type="ordered locus">Avin_00380</name>
</gene>
<name>NQOR_AZOVD</name>
<reference key="1">
    <citation type="journal article" date="2009" name="J. Bacteriol.">
        <title>Genome sequence of Azotobacter vinelandii, an obligate aerobe specialized to support diverse anaerobic metabolic processes.</title>
        <authorList>
            <person name="Setubal J.C."/>
            <person name="Dos Santos P."/>
            <person name="Goldman B.S."/>
            <person name="Ertesvaag H."/>
            <person name="Espin G."/>
            <person name="Rubio L.M."/>
            <person name="Valla S."/>
            <person name="Almeida N.F."/>
            <person name="Balasubramanian D."/>
            <person name="Cromes L."/>
            <person name="Curatti L."/>
            <person name="Du Z."/>
            <person name="Godsy E."/>
            <person name="Goodner B."/>
            <person name="Hellner-Burris K."/>
            <person name="Hernandez J.A."/>
            <person name="Houmiel K."/>
            <person name="Imperial J."/>
            <person name="Kennedy C."/>
            <person name="Larson T.J."/>
            <person name="Latreille P."/>
            <person name="Ligon L.S."/>
            <person name="Lu J."/>
            <person name="Maerk M."/>
            <person name="Miller N.M."/>
            <person name="Norton S."/>
            <person name="O'Carroll I.P."/>
            <person name="Paulsen I."/>
            <person name="Raulfs E.C."/>
            <person name="Roemer R."/>
            <person name="Rosser J."/>
            <person name="Segura D."/>
            <person name="Slater S."/>
            <person name="Stricklin S.L."/>
            <person name="Studholme D.J."/>
            <person name="Sun J."/>
            <person name="Viana C.J."/>
            <person name="Wallin E."/>
            <person name="Wang B."/>
            <person name="Wheeler C."/>
            <person name="Zhu H."/>
            <person name="Dean D.R."/>
            <person name="Dixon R."/>
            <person name="Wood D."/>
        </authorList>
    </citation>
    <scope>NUCLEOTIDE SEQUENCE [LARGE SCALE GENOMIC DNA]</scope>
    <source>
        <strain>DJ / ATCC BAA-1303</strain>
    </source>
</reference>
<keyword id="KW-0285">Flavoprotein</keyword>
<keyword id="KW-0288">FMN</keyword>
<keyword id="KW-0520">NAD</keyword>
<keyword id="KW-0521">NADP</keyword>
<keyword id="KW-0547">Nucleotide-binding</keyword>
<keyword id="KW-0560">Oxidoreductase</keyword>